<dbReference type="EMBL" id="CP000141">
    <property type="protein sequence ID" value="ABB14846.1"/>
    <property type="molecule type" value="Genomic_DNA"/>
</dbReference>
<dbReference type="RefSeq" id="WP_011344684.1">
    <property type="nucleotide sequence ID" value="NC_007503.1"/>
</dbReference>
<dbReference type="SMR" id="Q3AB74"/>
<dbReference type="FunCoup" id="Q3AB74">
    <property type="interactions" value="62"/>
</dbReference>
<dbReference type="STRING" id="246194.CHY_1790"/>
<dbReference type="KEGG" id="chy:CHY_1790"/>
<dbReference type="eggNOG" id="COG1220">
    <property type="taxonomic scope" value="Bacteria"/>
</dbReference>
<dbReference type="HOGENOM" id="CLU_033123_0_0_9"/>
<dbReference type="InParanoid" id="Q3AB74"/>
<dbReference type="OrthoDB" id="9804062at2"/>
<dbReference type="Proteomes" id="UP000002706">
    <property type="component" value="Chromosome"/>
</dbReference>
<dbReference type="GO" id="GO:0009376">
    <property type="term" value="C:HslUV protease complex"/>
    <property type="evidence" value="ECO:0007669"/>
    <property type="project" value="UniProtKB-UniRule"/>
</dbReference>
<dbReference type="GO" id="GO:0005524">
    <property type="term" value="F:ATP binding"/>
    <property type="evidence" value="ECO:0007669"/>
    <property type="project" value="UniProtKB-UniRule"/>
</dbReference>
<dbReference type="GO" id="GO:0016887">
    <property type="term" value="F:ATP hydrolysis activity"/>
    <property type="evidence" value="ECO:0007669"/>
    <property type="project" value="InterPro"/>
</dbReference>
<dbReference type="GO" id="GO:0008233">
    <property type="term" value="F:peptidase activity"/>
    <property type="evidence" value="ECO:0007669"/>
    <property type="project" value="InterPro"/>
</dbReference>
<dbReference type="GO" id="GO:0036402">
    <property type="term" value="F:proteasome-activating activity"/>
    <property type="evidence" value="ECO:0007669"/>
    <property type="project" value="UniProtKB-UniRule"/>
</dbReference>
<dbReference type="GO" id="GO:0043335">
    <property type="term" value="P:protein unfolding"/>
    <property type="evidence" value="ECO:0007669"/>
    <property type="project" value="UniProtKB-UniRule"/>
</dbReference>
<dbReference type="GO" id="GO:0051603">
    <property type="term" value="P:proteolysis involved in protein catabolic process"/>
    <property type="evidence" value="ECO:0007669"/>
    <property type="project" value="TreeGrafter"/>
</dbReference>
<dbReference type="FunFam" id="3.40.50.300:FF:000213">
    <property type="entry name" value="ATP-dependent protease ATPase subunit HslU"/>
    <property type="match status" value="1"/>
</dbReference>
<dbReference type="FunFam" id="3.40.50.300:FF:000220">
    <property type="entry name" value="ATP-dependent protease ATPase subunit HslU"/>
    <property type="match status" value="1"/>
</dbReference>
<dbReference type="Gene3D" id="1.10.8.60">
    <property type="match status" value="1"/>
</dbReference>
<dbReference type="Gene3D" id="1.10.8.10">
    <property type="entry name" value="DNA helicase RuvA subunit, C-terminal domain"/>
    <property type="match status" value="1"/>
</dbReference>
<dbReference type="Gene3D" id="3.40.50.300">
    <property type="entry name" value="P-loop containing nucleotide triphosphate hydrolases"/>
    <property type="match status" value="2"/>
</dbReference>
<dbReference type="HAMAP" id="MF_00249">
    <property type="entry name" value="HslU"/>
    <property type="match status" value="1"/>
</dbReference>
<dbReference type="InterPro" id="IPR003593">
    <property type="entry name" value="AAA+_ATPase"/>
</dbReference>
<dbReference type="InterPro" id="IPR050052">
    <property type="entry name" value="ATP-dep_Clp_protease_ClpX"/>
</dbReference>
<dbReference type="InterPro" id="IPR003959">
    <property type="entry name" value="ATPase_AAA_core"/>
</dbReference>
<dbReference type="InterPro" id="IPR019489">
    <property type="entry name" value="Clp_ATPase_C"/>
</dbReference>
<dbReference type="InterPro" id="IPR004491">
    <property type="entry name" value="HslU"/>
</dbReference>
<dbReference type="InterPro" id="IPR027417">
    <property type="entry name" value="P-loop_NTPase"/>
</dbReference>
<dbReference type="NCBIfam" id="TIGR00390">
    <property type="entry name" value="hslU"/>
    <property type="match status" value="1"/>
</dbReference>
<dbReference type="NCBIfam" id="NF003544">
    <property type="entry name" value="PRK05201.1"/>
    <property type="match status" value="1"/>
</dbReference>
<dbReference type="PANTHER" id="PTHR48102">
    <property type="entry name" value="ATP-DEPENDENT CLP PROTEASE ATP-BINDING SUBUNIT CLPX-LIKE, MITOCHONDRIAL-RELATED"/>
    <property type="match status" value="1"/>
</dbReference>
<dbReference type="PANTHER" id="PTHR48102:SF3">
    <property type="entry name" value="ATP-DEPENDENT PROTEASE ATPASE SUBUNIT HSLU"/>
    <property type="match status" value="1"/>
</dbReference>
<dbReference type="Pfam" id="PF00004">
    <property type="entry name" value="AAA"/>
    <property type="match status" value="1"/>
</dbReference>
<dbReference type="Pfam" id="PF07724">
    <property type="entry name" value="AAA_2"/>
    <property type="match status" value="1"/>
</dbReference>
<dbReference type="SMART" id="SM00382">
    <property type="entry name" value="AAA"/>
    <property type="match status" value="1"/>
</dbReference>
<dbReference type="SMART" id="SM01086">
    <property type="entry name" value="ClpB_D2-small"/>
    <property type="match status" value="1"/>
</dbReference>
<dbReference type="SUPFAM" id="SSF52540">
    <property type="entry name" value="P-loop containing nucleoside triphosphate hydrolases"/>
    <property type="match status" value="1"/>
</dbReference>
<keyword id="KW-0067">ATP-binding</keyword>
<keyword id="KW-0143">Chaperone</keyword>
<keyword id="KW-0963">Cytoplasm</keyword>
<keyword id="KW-0547">Nucleotide-binding</keyword>
<keyword id="KW-1185">Reference proteome</keyword>
<keyword id="KW-0346">Stress response</keyword>
<evidence type="ECO:0000255" key="1">
    <source>
        <dbReference type="HAMAP-Rule" id="MF_00249"/>
    </source>
</evidence>
<sequence length="461" mass="52514">MENLTPRQIVEYLDKYIIGQEAAKKAVAVALRNRYRRKLLPPHLKDEIIPKNILMIGPTGVGKTEIARRLAKLIKAPFVKVEATKFTEVGYVGRDVEGMIRDLVETSLRMVREEKIKMVEDKAYNLAVERLSEIMIPNPKKENIKNPFEMFFGGIREDAAKTDPAYDELNYRRRELQDKIKKGFLDNEMVEIEVEEQKTPMVEVFGVGGIEEMGLNFQDILGGLIPPRRKKRRVTVKEALKILTQQEAQKLIDMDEVQREAIKRAEEDGIVFLDEIDKIASTGNTHGPDVSRGGVQRDILPIVEGSTVLTKYGPVKTDHILFIAAGAFHMSKPSDLIPELQGRFPIRVELKSLTVEDFKKILTVPENALTKQYVELLATEGVNLKFTEDSLEEIAKMAYTVNERNENIGARRLITILEKVLEDLSFNAPEMWGQTVVIDRKFVQDKLSEIVHDSDLSRYIL</sequence>
<proteinExistence type="inferred from homology"/>
<organism>
    <name type="scientific">Carboxydothermus hydrogenoformans (strain ATCC BAA-161 / DSM 6008 / Z-2901)</name>
    <dbReference type="NCBI Taxonomy" id="246194"/>
    <lineage>
        <taxon>Bacteria</taxon>
        <taxon>Bacillati</taxon>
        <taxon>Bacillota</taxon>
        <taxon>Clostridia</taxon>
        <taxon>Thermoanaerobacterales</taxon>
        <taxon>Thermoanaerobacteraceae</taxon>
        <taxon>Carboxydothermus</taxon>
    </lineage>
</organism>
<comment type="function">
    <text evidence="1">ATPase subunit of a proteasome-like degradation complex; this subunit has chaperone activity. The binding of ATP and its subsequent hydrolysis by HslU are essential for unfolding of protein substrates subsequently hydrolyzed by HslV. HslU recognizes the N-terminal part of its protein substrates and unfolds these before they are guided to HslV for hydrolysis.</text>
</comment>
<comment type="subunit">
    <text evidence="1">A double ring-shaped homohexamer of HslV is capped on each side by a ring-shaped HslU homohexamer. The assembly of the HslU/HslV complex is dependent on binding of ATP.</text>
</comment>
<comment type="subcellular location">
    <subcellularLocation>
        <location evidence="1">Cytoplasm</location>
    </subcellularLocation>
</comment>
<comment type="similarity">
    <text evidence="1">Belongs to the ClpX chaperone family. HslU subfamily.</text>
</comment>
<reference key="1">
    <citation type="journal article" date="2005" name="PLoS Genet.">
        <title>Life in hot carbon monoxide: the complete genome sequence of Carboxydothermus hydrogenoformans Z-2901.</title>
        <authorList>
            <person name="Wu M."/>
            <person name="Ren Q."/>
            <person name="Durkin A.S."/>
            <person name="Daugherty S.C."/>
            <person name="Brinkac L.M."/>
            <person name="Dodson R.J."/>
            <person name="Madupu R."/>
            <person name="Sullivan S.A."/>
            <person name="Kolonay J.F."/>
            <person name="Nelson W.C."/>
            <person name="Tallon L.J."/>
            <person name="Jones K.M."/>
            <person name="Ulrich L.E."/>
            <person name="Gonzalez J.M."/>
            <person name="Zhulin I.B."/>
            <person name="Robb F.T."/>
            <person name="Eisen J.A."/>
        </authorList>
    </citation>
    <scope>NUCLEOTIDE SEQUENCE [LARGE SCALE GENOMIC DNA]</scope>
    <source>
        <strain>ATCC BAA-161 / DSM 6008 / Z-2901</strain>
    </source>
</reference>
<name>HSLU_CARHZ</name>
<protein>
    <recommendedName>
        <fullName evidence="1">ATP-dependent protease ATPase subunit HslU</fullName>
    </recommendedName>
    <alternativeName>
        <fullName evidence="1">Unfoldase HslU</fullName>
    </alternativeName>
</protein>
<gene>
    <name evidence="1" type="primary">hslU</name>
    <name type="ordered locus">CHY_1790</name>
</gene>
<feature type="chain" id="PRO_1000012727" description="ATP-dependent protease ATPase subunit HslU">
    <location>
        <begin position="1"/>
        <end position="461"/>
    </location>
</feature>
<feature type="binding site" evidence="1">
    <location>
        <position position="18"/>
    </location>
    <ligand>
        <name>ATP</name>
        <dbReference type="ChEBI" id="CHEBI:30616"/>
    </ligand>
</feature>
<feature type="binding site" evidence="1">
    <location>
        <begin position="60"/>
        <end position="65"/>
    </location>
    <ligand>
        <name>ATP</name>
        <dbReference type="ChEBI" id="CHEBI:30616"/>
    </ligand>
</feature>
<feature type="binding site" evidence="1">
    <location>
        <position position="274"/>
    </location>
    <ligand>
        <name>ATP</name>
        <dbReference type="ChEBI" id="CHEBI:30616"/>
    </ligand>
</feature>
<feature type="binding site" evidence="1">
    <location>
        <position position="339"/>
    </location>
    <ligand>
        <name>ATP</name>
        <dbReference type="ChEBI" id="CHEBI:30616"/>
    </ligand>
</feature>
<feature type="binding site" evidence="1">
    <location>
        <position position="411"/>
    </location>
    <ligand>
        <name>ATP</name>
        <dbReference type="ChEBI" id="CHEBI:30616"/>
    </ligand>
</feature>
<accession>Q3AB74</accession>